<gene>
    <name type="primary">OR10A7</name>
</gene>
<keyword id="KW-1003">Cell membrane</keyword>
<keyword id="KW-0297">G-protein coupled receptor</keyword>
<keyword id="KW-0325">Glycoprotein</keyword>
<keyword id="KW-0472">Membrane</keyword>
<keyword id="KW-0552">Olfaction</keyword>
<keyword id="KW-0675">Receptor</keyword>
<keyword id="KW-1185">Reference proteome</keyword>
<keyword id="KW-0716">Sensory transduction</keyword>
<keyword id="KW-0807">Transducer</keyword>
<keyword id="KW-0812">Transmembrane</keyword>
<keyword id="KW-1133">Transmembrane helix</keyword>
<protein>
    <recommendedName>
        <fullName>Olfactory receptor 10A7</fullName>
    </recommendedName>
    <alternativeName>
        <fullName>Olfactory receptor OR12-6</fullName>
    </alternativeName>
</protein>
<name>O10A7_HUMAN</name>
<comment type="function">
    <text evidence="3">Odorant receptor.</text>
</comment>
<comment type="subcellular location">
    <subcellularLocation>
        <location>Cell membrane</location>
        <topology>Multi-pass membrane protein</topology>
    </subcellularLocation>
</comment>
<comment type="similarity">
    <text evidence="2">Belongs to the G-protein coupled receptor 1 family.</text>
</comment>
<comment type="online information" name="Human Olfactory Receptor Data Exploratorium (HORDE)">
    <link uri="http://genome.weizmann.ac.il/horde/card/index/symbol:OR10A7"/>
</comment>
<sequence>MICENHTRVTEFILLGFTNNPEMQVSLFIFFLAIYTVTLLGNFLIVTVTSVDLALQTPMYFFLQNLSLLEVCFTLVMVPKMLVDLVSPRKIISFVGCGTQMYFFFFFGSSECFLLSMMAYDRFVAICNPLHYSVIMNRSLCLWMAIGSWMSGVPVSMLQTAWMMALPFCGPNAVDHFFCDGPPVLKLVTVDTTMYEMQALASTLLFIMFPFCLILVSYTRIIITILRMSSATGRQKAFSTCSSHLIVVSLFYGTASLTYLRPKSNQSPESKKLVSLSYTVITPMLNPIIYGLRNNEVKGAVKRTITQKVLQKLDVF</sequence>
<dbReference type="EMBL" id="AB065864">
    <property type="protein sequence ID" value="BAC06082.1"/>
    <property type="molecule type" value="Genomic_DNA"/>
</dbReference>
<dbReference type="EMBL" id="AF399626">
    <property type="protein sequence ID" value="AAK95111.1"/>
    <property type="molecule type" value="Genomic_DNA"/>
</dbReference>
<dbReference type="EMBL" id="BK004327">
    <property type="protein sequence ID" value="DAA04725.1"/>
    <property type="molecule type" value="Genomic_DNA"/>
</dbReference>
<dbReference type="CCDS" id="CCDS31815.1"/>
<dbReference type="RefSeq" id="NP_001005280.1">
    <property type="nucleotide sequence ID" value="NM_001005280.1"/>
</dbReference>
<dbReference type="SMR" id="Q8NGE5"/>
<dbReference type="FunCoup" id="Q8NGE5">
    <property type="interactions" value="459"/>
</dbReference>
<dbReference type="STRING" id="9606.ENSP00000326718"/>
<dbReference type="GlyCosmos" id="Q8NGE5">
    <property type="glycosylation" value="1 site, No reported glycans"/>
</dbReference>
<dbReference type="GlyGen" id="Q8NGE5">
    <property type="glycosylation" value="1 site, 1 N-linked glycan (1 site)"/>
</dbReference>
<dbReference type="iPTMnet" id="Q8NGE5"/>
<dbReference type="PhosphoSitePlus" id="Q8NGE5"/>
<dbReference type="BioMuta" id="OR10A7"/>
<dbReference type="DMDM" id="38372676"/>
<dbReference type="MassIVE" id="Q8NGE5"/>
<dbReference type="PaxDb" id="9606-ENSP00000326718"/>
<dbReference type="PeptideAtlas" id="Q8NGE5"/>
<dbReference type="ProteomicsDB" id="73490"/>
<dbReference type="Antibodypedia" id="58533">
    <property type="antibodies" value="45 antibodies from 19 providers"/>
</dbReference>
<dbReference type="DNASU" id="121364"/>
<dbReference type="Ensembl" id="ENST00000326258.1">
    <property type="protein sequence ID" value="ENSP00000326718.1"/>
    <property type="gene ID" value="ENSG00000179919.3"/>
</dbReference>
<dbReference type="GeneID" id="121364"/>
<dbReference type="KEGG" id="hsa:121364"/>
<dbReference type="MANE-Select" id="ENST00000326258.1">
    <property type="protein sequence ID" value="ENSP00000326718.1"/>
    <property type="RefSeq nucleotide sequence ID" value="NM_001005280.1"/>
    <property type="RefSeq protein sequence ID" value="NP_001005280.1"/>
</dbReference>
<dbReference type="UCSC" id="uc010spf.2">
    <property type="organism name" value="human"/>
</dbReference>
<dbReference type="AGR" id="HGNC:15329"/>
<dbReference type="CTD" id="121364"/>
<dbReference type="GeneCards" id="OR10A7"/>
<dbReference type="HGNC" id="HGNC:15329">
    <property type="gene designation" value="OR10A7"/>
</dbReference>
<dbReference type="HPA" id="ENSG00000179919">
    <property type="expression patterns" value="Not detected"/>
</dbReference>
<dbReference type="neXtProt" id="NX_Q8NGE5"/>
<dbReference type="PharmGKB" id="PA31955"/>
<dbReference type="VEuPathDB" id="HostDB:ENSG00000179919"/>
<dbReference type="eggNOG" id="ENOG502QVH7">
    <property type="taxonomic scope" value="Eukaryota"/>
</dbReference>
<dbReference type="GeneTree" id="ENSGT01120000271813"/>
<dbReference type="HOGENOM" id="CLU_012526_1_2_1"/>
<dbReference type="InParanoid" id="Q8NGE5"/>
<dbReference type="OMA" id="MAIGSWM"/>
<dbReference type="OrthoDB" id="9975554at2759"/>
<dbReference type="PAN-GO" id="Q8NGE5">
    <property type="GO annotations" value="1 GO annotation based on evolutionary models"/>
</dbReference>
<dbReference type="PhylomeDB" id="Q8NGE5"/>
<dbReference type="TreeFam" id="TF337350"/>
<dbReference type="PathwayCommons" id="Q8NGE5"/>
<dbReference type="Reactome" id="R-HSA-9752946">
    <property type="pathway name" value="Expression and translocation of olfactory receptors"/>
</dbReference>
<dbReference type="SignaLink" id="Q8NGE5"/>
<dbReference type="BioGRID-ORCS" id="121364">
    <property type="hits" value="10 hits in 741 CRISPR screens"/>
</dbReference>
<dbReference type="GeneWiki" id="OR10A7"/>
<dbReference type="GenomeRNAi" id="121364"/>
<dbReference type="Pharos" id="Q8NGE5">
    <property type="development level" value="Tdark"/>
</dbReference>
<dbReference type="PRO" id="PR:Q8NGE5"/>
<dbReference type="Proteomes" id="UP000005640">
    <property type="component" value="Chromosome 12"/>
</dbReference>
<dbReference type="RNAct" id="Q8NGE5">
    <property type="molecule type" value="protein"/>
</dbReference>
<dbReference type="Bgee" id="ENSG00000179919">
    <property type="expression patterns" value="Expressed in male germ line stem cell (sensu Vertebrata) in testis and 1 other cell type or tissue"/>
</dbReference>
<dbReference type="ExpressionAtlas" id="Q8NGE5">
    <property type="expression patterns" value="differential"/>
</dbReference>
<dbReference type="GO" id="GO:0005886">
    <property type="term" value="C:plasma membrane"/>
    <property type="evidence" value="ECO:0000318"/>
    <property type="project" value="GO_Central"/>
</dbReference>
<dbReference type="GO" id="GO:0004930">
    <property type="term" value="F:G protein-coupled receptor activity"/>
    <property type="evidence" value="ECO:0007669"/>
    <property type="project" value="UniProtKB-KW"/>
</dbReference>
<dbReference type="GO" id="GO:0004984">
    <property type="term" value="F:olfactory receptor activity"/>
    <property type="evidence" value="ECO:0000318"/>
    <property type="project" value="GO_Central"/>
</dbReference>
<dbReference type="GO" id="GO:0050911">
    <property type="term" value="P:detection of chemical stimulus involved in sensory perception of smell"/>
    <property type="evidence" value="ECO:0000318"/>
    <property type="project" value="GO_Central"/>
</dbReference>
<dbReference type="CDD" id="cd15225">
    <property type="entry name" value="7tmA_OR10A-like"/>
    <property type="match status" value="1"/>
</dbReference>
<dbReference type="FunFam" id="1.20.1070.10:FF:000001">
    <property type="entry name" value="Olfactory receptor"/>
    <property type="match status" value="1"/>
</dbReference>
<dbReference type="Gene3D" id="1.20.1070.10">
    <property type="entry name" value="Rhodopsin 7-helix transmembrane proteins"/>
    <property type="match status" value="1"/>
</dbReference>
<dbReference type="InterPro" id="IPR000276">
    <property type="entry name" value="GPCR_Rhodpsn"/>
</dbReference>
<dbReference type="InterPro" id="IPR017452">
    <property type="entry name" value="GPCR_Rhodpsn_7TM"/>
</dbReference>
<dbReference type="InterPro" id="IPR000725">
    <property type="entry name" value="Olfact_rcpt"/>
</dbReference>
<dbReference type="PANTHER" id="PTHR26453">
    <property type="entry name" value="OLFACTORY RECEPTOR"/>
    <property type="match status" value="1"/>
</dbReference>
<dbReference type="Pfam" id="PF13853">
    <property type="entry name" value="7tm_4"/>
    <property type="match status" value="1"/>
</dbReference>
<dbReference type="PRINTS" id="PR00237">
    <property type="entry name" value="GPCRRHODOPSN"/>
</dbReference>
<dbReference type="PRINTS" id="PR00245">
    <property type="entry name" value="OLFACTORYR"/>
</dbReference>
<dbReference type="SUPFAM" id="SSF81321">
    <property type="entry name" value="Family A G protein-coupled receptor-like"/>
    <property type="match status" value="1"/>
</dbReference>
<dbReference type="PROSITE" id="PS00237">
    <property type="entry name" value="G_PROTEIN_RECEP_F1_1"/>
    <property type="match status" value="1"/>
</dbReference>
<dbReference type="PROSITE" id="PS50262">
    <property type="entry name" value="G_PROTEIN_RECEP_F1_2"/>
    <property type="match status" value="1"/>
</dbReference>
<accession>Q8NGE5</accession>
<accession>Q6IFD5</accession>
<accession>Q96R19</accession>
<organism>
    <name type="scientific">Homo sapiens</name>
    <name type="common">Human</name>
    <dbReference type="NCBI Taxonomy" id="9606"/>
    <lineage>
        <taxon>Eukaryota</taxon>
        <taxon>Metazoa</taxon>
        <taxon>Chordata</taxon>
        <taxon>Craniata</taxon>
        <taxon>Vertebrata</taxon>
        <taxon>Euteleostomi</taxon>
        <taxon>Mammalia</taxon>
        <taxon>Eutheria</taxon>
        <taxon>Euarchontoglires</taxon>
        <taxon>Primates</taxon>
        <taxon>Haplorrhini</taxon>
        <taxon>Catarrhini</taxon>
        <taxon>Hominidae</taxon>
        <taxon>Homo</taxon>
    </lineage>
</organism>
<proteinExistence type="inferred from homology"/>
<evidence type="ECO:0000255" key="1"/>
<evidence type="ECO:0000255" key="2">
    <source>
        <dbReference type="PROSITE-ProRule" id="PRU00521"/>
    </source>
</evidence>
<evidence type="ECO:0000305" key="3"/>
<reference key="1">
    <citation type="submission" date="2001-07" db="EMBL/GenBank/DDBJ databases">
        <title>Genome-wide discovery and analysis of human seven transmembrane helix receptor genes.</title>
        <authorList>
            <person name="Suwa M."/>
            <person name="Sato T."/>
            <person name="Okouchi I."/>
            <person name="Arita M."/>
            <person name="Futami K."/>
            <person name="Matsumoto S."/>
            <person name="Tsutsumi S."/>
            <person name="Aburatani H."/>
            <person name="Asai K."/>
            <person name="Akiyama Y."/>
        </authorList>
    </citation>
    <scope>NUCLEOTIDE SEQUENCE [GENOMIC DNA]</scope>
</reference>
<reference key="2">
    <citation type="journal article" date="2002" name="Genomics">
        <title>DEFOG: a practical scheme for deciphering families of genes.</title>
        <authorList>
            <person name="Fuchs T."/>
            <person name="Malecova B."/>
            <person name="Linhart C."/>
            <person name="Sharan R."/>
            <person name="Khen M."/>
            <person name="Herwig R."/>
            <person name="Shmulevich D."/>
            <person name="Elkon R."/>
            <person name="Steinfath M."/>
            <person name="O'Brien J.K."/>
            <person name="Radelof U."/>
            <person name="Lehrach H."/>
            <person name="Lancet D."/>
            <person name="Shamir R."/>
        </authorList>
    </citation>
    <scope>NUCLEOTIDE SEQUENCE [GENOMIC DNA] OF 68-283</scope>
</reference>
<reference key="3">
    <citation type="journal article" date="2004" name="Proc. Natl. Acad. Sci. U.S.A.">
        <title>The human olfactory receptor gene family.</title>
        <authorList>
            <person name="Malnic B."/>
            <person name="Godfrey P.A."/>
            <person name="Buck L.B."/>
        </authorList>
    </citation>
    <scope>IDENTIFICATION</scope>
</reference>
<reference key="4">
    <citation type="journal article" date="2004" name="Proc. Natl. Acad. Sci. U.S.A.">
        <authorList>
            <person name="Malnic B."/>
            <person name="Godfrey P.A."/>
            <person name="Buck L.B."/>
        </authorList>
    </citation>
    <scope>ERRATUM OF PUBMED:14983052</scope>
</reference>
<feature type="chain" id="PRO_0000150690" description="Olfactory receptor 10A7">
    <location>
        <begin position="1"/>
        <end position="316"/>
    </location>
</feature>
<feature type="topological domain" description="Extracellular" evidence="1">
    <location>
        <begin position="1"/>
        <end position="25"/>
    </location>
</feature>
<feature type="transmembrane region" description="Helical; Name=1" evidence="1">
    <location>
        <begin position="26"/>
        <end position="46"/>
    </location>
</feature>
<feature type="topological domain" description="Cytoplasmic" evidence="1">
    <location>
        <begin position="47"/>
        <end position="54"/>
    </location>
</feature>
<feature type="transmembrane region" description="Helical; Name=2" evidence="1">
    <location>
        <begin position="55"/>
        <end position="75"/>
    </location>
</feature>
<feature type="topological domain" description="Extracellular" evidence="1">
    <location>
        <begin position="76"/>
        <end position="99"/>
    </location>
</feature>
<feature type="transmembrane region" description="Helical; Name=3" evidence="1">
    <location>
        <begin position="100"/>
        <end position="120"/>
    </location>
</feature>
<feature type="topological domain" description="Cytoplasmic" evidence="1">
    <location>
        <begin position="121"/>
        <end position="139"/>
    </location>
</feature>
<feature type="transmembrane region" description="Helical; Name=4" evidence="1">
    <location>
        <begin position="140"/>
        <end position="160"/>
    </location>
</feature>
<feature type="topological domain" description="Extracellular" evidence="1">
    <location>
        <begin position="161"/>
        <end position="197"/>
    </location>
</feature>
<feature type="transmembrane region" description="Helical; Name=5" evidence="1">
    <location>
        <begin position="198"/>
        <end position="217"/>
    </location>
</feature>
<feature type="topological domain" description="Cytoplasmic" evidence="1">
    <location>
        <begin position="218"/>
        <end position="237"/>
    </location>
</feature>
<feature type="transmembrane region" description="Helical; Name=6" evidence="1">
    <location>
        <begin position="238"/>
        <end position="258"/>
    </location>
</feature>
<feature type="topological domain" description="Extracellular" evidence="1">
    <location>
        <begin position="259"/>
        <end position="271"/>
    </location>
</feature>
<feature type="transmembrane region" description="Helical; Name=7" evidence="1">
    <location>
        <begin position="272"/>
        <end position="292"/>
    </location>
</feature>
<feature type="topological domain" description="Cytoplasmic" evidence="1">
    <location>
        <begin position="293"/>
        <end position="316"/>
    </location>
</feature>
<feature type="glycosylation site" description="N-linked (GlcNAc...) asparagine" evidence="1">
    <location>
        <position position="5"/>
    </location>
</feature>
<feature type="sequence variant" id="VAR_053266" description="In dbSNP:rs12578318.">
    <original>G</original>
    <variation>S</variation>
    <location>
        <position position="96"/>
    </location>
</feature>